<reference key="1">
    <citation type="submission" date="2004-04" db="EMBL/GenBank/DDBJ databases">
        <authorList>
            <consortium name="NIH - Xenopus Gene Collection (XGC) project"/>
        </authorList>
    </citation>
    <scope>NUCLEOTIDE SEQUENCE [LARGE SCALE MRNA]</scope>
    <source>
        <tissue>Embryo</tissue>
    </source>
</reference>
<protein>
    <recommendedName>
        <fullName>Carbonyl reductase family member 4</fullName>
        <ecNumber>1.-.-.-</ecNumber>
    </recommendedName>
    <alternativeName>
        <fullName evidence="1">3-ketoacyl-[acyl-carrier-protein] reductase beta subunit</fullName>
        <shortName evidence="1">KAR beta subunit</shortName>
    </alternativeName>
    <alternativeName>
        <fullName>3-oxoacyl-[acyl-carrier-protein] reductase</fullName>
        <ecNumber evidence="1">1.1.1.-</ecNumber>
    </alternativeName>
    <alternativeName>
        <fullName>Quinone reductase CBR4</fullName>
    </alternativeName>
</protein>
<keyword id="KW-0275">Fatty acid biosynthesis</keyword>
<keyword id="KW-0276">Fatty acid metabolism</keyword>
<keyword id="KW-0444">Lipid biosynthesis</keyword>
<keyword id="KW-0443">Lipid metabolism</keyword>
<keyword id="KW-0496">Mitochondrion</keyword>
<keyword id="KW-0520">NAD</keyword>
<keyword id="KW-0521">NADP</keyword>
<keyword id="KW-0560">Oxidoreductase</keyword>
<keyword id="KW-1185">Reference proteome</keyword>
<evidence type="ECO:0000250" key="1">
    <source>
        <dbReference type="UniProtKB" id="Q8N4T8"/>
    </source>
</evidence>
<evidence type="ECO:0000255" key="2">
    <source>
        <dbReference type="PROSITE-ProRule" id="PRU10001"/>
    </source>
</evidence>
<evidence type="ECO:0000305" key="3"/>
<proteinExistence type="evidence at transcript level"/>
<sequence length="236" mass="25207">MSKVCAVFGGSRGIGKAVAKLLAQKDYKVAVISRNLEVAQAAVTEIGAHLALSCDVSKENEIQCTFKEIKNNLGNIDYLVNSAGISRDALLLRTRSEDIMSLLSINLVGTIQTCKVALKGMIQQQGGSIVNIGSIVGHKGNIGQSIYGASKEGLIGFSKSLAKEVAKRNIRVNVVAPGFIRTDMTSDLKEDSLNKMIPLGRFGEPEEVAQSVLFLLESPYITGHVLVVDGGLQLHL</sequence>
<feature type="chain" id="PRO_0000319882" description="Carbonyl reductase family member 4">
    <location>
        <begin position="1"/>
        <end position="236"/>
    </location>
</feature>
<feature type="active site" description="Proton acceptor" evidence="2">
    <location>
        <position position="147"/>
    </location>
</feature>
<feature type="binding site" evidence="1">
    <location>
        <begin position="11"/>
        <end position="14"/>
    </location>
    <ligand>
        <name>NADP(+)</name>
        <dbReference type="ChEBI" id="CHEBI:58349"/>
    </ligand>
</feature>
<feature type="binding site" evidence="1">
    <location>
        <begin position="34"/>
        <end position="35"/>
    </location>
    <ligand>
        <name>NADP(+)</name>
        <dbReference type="ChEBI" id="CHEBI:58349"/>
    </ligand>
</feature>
<feature type="binding site" evidence="1">
    <location>
        <position position="55"/>
    </location>
    <ligand>
        <name>NADP(+)</name>
        <dbReference type="ChEBI" id="CHEBI:58349"/>
    </ligand>
</feature>
<feature type="binding site" evidence="1">
    <location>
        <begin position="82"/>
        <end position="84"/>
    </location>
    <ligand>
        <name>NADP(+)</name>
        <dbReference type="ChEBI" id="CHEBI:58349"/>
    </ligand>
</feature>
<feature type="binding site" evidence="1">
    <location>
        <position position="134"/>
    </location>
    <ligand>
        <name>substrate</name>
    </ligand>
</feature>
<feature type="binding site" evidence="1">
    <location>
        <position position="147"/>
    </location>
    <ligand>
        <name>NADP(+)</name>
        <dbReference type="ChEBI" id="CHEBI:58349"/>
    </ligand>
</feature>
<feature type="binding site" evidence="1">
    <location>
        <position position="151"/>
    </location>
    <ligand>
        <name>NADP(+)</name>
        <dbReference type="ChEBI" id="CHEBI:58349"/>
    </ligand>
</feature>
<feature type="binding site" evidence="1">
    <location>
        <begin position="180"/>
        <end position="182"/>
    </location>
    <ligand>
        <name>NADP(+)</name>
        <dbReference type="ChEBI" id="CHEBI:58349"/>
    </ligand>
</feature>
<dbReference type="EC" id="1.-.-.-"/>
<dbReference type="EC" id="1.1.1.-" evidence="1"/>
<dbReference type="EMBL" id="BC068653">
    <property type="protein sequence ID" value="AAH68653.1"/>
    <property type="molecule type" value="mRNA"/>
</dbReference>
<dbReference type="RefSeq" id="NP_001084717.1">
    <property type="nucleotide sequence ID" value="NM_001091248.1"/>
</dbReference>
<dbReference type="SMR" id="Q6NUE2"/>
<dbReference type="DNASU" id="414681"/>
<dbReference type="GeneID" id="414681"/>
<dbReference type="KEGG" id="xla:414681"/>
<dbReference type="AGR" id="Xenbase:XB-GENE-5935891"/>
<dbReference type="CTD" id="414681"/>
<dbReference type="OrthoDB" id="294295at2759"/>
<dbReference type="UniPathway" id="UPA00094"/>
<dbReference type="Proteomes" id="UP000186698">
    <property type="component" value="Chromosome 1L"/>
</dbReference>
<dbReference type="Bgee" id="414681">
    <property type="expression patterns" value="Expressed in egg cell and 19 other cell types or tissues"/>
</dbReference>
<dbReference type="GO" id="GO:0005759">
    <property type="term" value="C:mitochondrial matrix"/>
    <property type="evidence" value="ECO:0000250"/>
    <property type="project" value="UniProtKB"/>
</dbReference>
<dbReference type="GO" id="GO:1990204">
    <property type="term" value="C:oxidoreductase complex"/>
    <property type="evidence" value="ECO:0000250"/>
    <property type="project" value="UniProtKB"/>
</dbReference>
<dbReference type="GO" id="GO:0004316">
    <property type="term" value="F:3-oxoacyl-[acyl-carrier-protein] reductase (NADPH) activity"/>
    <property type="evidence" value="ECO:0000250"/>
    <property type="project" value="UniProtKB"/>
</dbReference>
<dbReference type="GO" id="GO:0016616">
    <property type="term" value="F:oxidoreductase activity, acting on the CH-OH group of donors, NAD or NADP as acceptor"/>
    <property type="evidence" value="ECO:0000318"/>
    <property type="project" value="GO_Central"/>
</dbReference>
<dbReference type="GO" id="GO:0048038">
    <property type="term" value="F:quinone binding"/>
    <property type="evidence" value="ECO:0000318"/>
    <property type="project" value="GO_Central"/>
</dbReference>
<dbReference type="GO" id="GO:0006633">
    <property type="term" value="P:fatty acid biosynthetic process"/>
    <property type="evidence" value="ECO:0000250"/>
    <property type="project" value="UniProtKB"/>
</dbReference>
<dbReference type="GO" id="GO:0051290">
    <property type="term" value="P:protein heterotetramerization"/>
    <property type="evidence" value="ECO:0000250"/>
    <property type="project" value="UniProtKB"/>
</dbReference>
<dbReference type="FunFam" id="3.40.50.720:FF:000285">
    <property type="entry name" value="Carbonyl reductase family member 4"/>
    <property type="match status" value="1"/>
</dbReference>
<dbReference type="Gene3D" id="3.40.50.720">
    <property type="entry name" value="NAD(P)-binding Rossmann-like Domain"/>
    <property type="match status" value="1"/>
</dbReference>
<dbReference type="InterPro" id="IPR036291">
    <property type="entry name" value="NAD(P)-bd_dom_sf"/>
</dbReference>
<dbReference type="InterPro" id="IPR020904">
    <property type="entry name" value="Sc_DH/Rdtase_CS"/>
</dbReference>
<dbReference type="InterPro" id="IPR002347">
    <property type="entry name" value="SDR_fam"/>
</dbReference>
<dbReference type="PANTHER" id="PTHR42760:SF133">
    <property type="entry name" value="3-OXOACYL-[ACYL-CARRIER-PROTEIN] REDUCTASE"/>
    <property type="match status" value="1"/>
</dbReference>
<dbReference type="PANTHER" id="PTHR42760">
    <property type="entry name" value="SHORT-CHAIN DEHYDROGENASES/REDUCTASES FAMILY MEMBER"/>
    <property type="match status" value="1"/>
</dbReference>
<dbReference type="Pfam" id="PF13561">
    <property type="entry name" value="adh_short_C2"/>
    <property type="match status" value="1"/>
</dbReference>
<dbReference type="PRINTS" id="PR00081">
    <property type="entry name" value="GDHRDH"/>
</dbReference>
<dbReference type="PRINTS" id="PR00080">
    <property type="entry name" value="SDRFAMILY"/>
</dbReference>
<dbReference type="SUPFAM" id="SSF51735">
    <property type="entry name" value="NAD(P)-binding Rossmann-fold domains"/>
    <property type="match status" value="1"/>
</dbReference>
<dbReference type="PROSITE" id="PS00061">
    <property type="entry name" value="ADH_SHORT"/>
    <property type="match status" value="1"/>
</dbReference>
<name>CBR4_XENLA</name>
<organism>
    <name type="scientific">Xenopus laevis</name>
    <name type="common">African clawed frog</name>
    <dbReference type="NCBI Taxonomy" id="8355"/>
    <lineage>
        <taxon>Eukaryota</taxon>
        <taxon>Metazoa</taxon>
        <taxon>Chordata</taxon>
        <taxon>Craniata</taxon>
        <taxon>Vertebrata</taxon>
        <taxon>Euteleostomi</taxon>
        <taxon>Amphibia</taxon>
        <taxon>Batrachia</taxon>
        <taxon>Anura</taxon>
        <taxon>Pipoidea</taxon>
        <taxon>Pipidae</taxon>
        <taxon>Xenopodinae</taxon>
        <taxon>Xenopus</taxon>
        <taxon>Xenopus</taxon>
    </lineage>
</organism>
<gene>
    <name type="primary">cbr4</name>
</gene>
<comment type="function">
    <text evidence="1">The heterotetramer with HSD17B8 has NADH-dependent 3-ketoacyl-acyl carrier protein reductase activity, and thereby plays a role in mitochondrial fatty acid biosynthesis. Within the heterotetramer, HSD17B8 binds NADH; CBR4 binds NADPD. The homotetramer has NADPH-dependent quinone reductase activity. Both homotetramer and the heterotetramer have broad in vitro substrate specificity and can reduce 9,10-phenanthrenequinone, 1,4-benzoquinone and various other o-quinones and p-quinones.</text>
</comment>
<comment type="pathway">
    <text evidence="1">Lipid metabolism; fatty acid biosynthesis.</text>
</comment>
<comment type="subunit">
    <text evidence="1">Homotetramer (in vitro). Heterotetramer with HSD17B8; contains two molecules each of HSD17B8 and CBR4.</text>
</comment>
<comment type="subcellular location">
    <subcellularLocation>
        <location evidence="1">Mitochondrion matrix</location>
    </subcellularLocation>
</comment>
<comment type="similarity">
    <text evidence="3">Belongs to the short-chain dehydrogenases/reductases (SDR) family.</text>
</comment>
<accession>Q6NUE2</accession>